<keyword id="KW-0131">Cell cycle</keyword>
<keyword id="KW-0132">Cell division</keyword>
<keyword id="KW-0997">Cell inner membrane</keyword>
<keyword id="KW-1003">Cell membrane</keyword>
<keyword id="KW-0472">Membrane</keyword>
<keyword id="KW-0812">Transmembrane</keyword>
<keyword id="KW-1133">Transmembrane helix</keyword>
<comment type="function">
    <text evidence="1">Essential cell division protein that stabilizes the FtsZ protofilaments by cross-linking them and that serves as a cytoplasmic membrane anchor for the Z ring. Also required for the recruitment to the septal ring of downstream cell division proteins.</text>
</comment>
<comment type="subunit">
    <text evidence="1">Interacts with FtsZ via their C-terminal domains.</text>
</comment>
<comment type="subcellular location">
    <subcellularLocation>
        <location evidence="1">Cell inner membrane</location>
        <topology evidence="1">Single-pass type I membrane protein</topology>
    </subcellularLocation>
    <text evidence="1">Localizes to the Z ring in an FtsZ-dependent manner.</text>
</comment>
<comment type="similarity">
    <text evidence="1">Belongs to the ZipA family.</text>
</comment>
<accession>B2K918</accession>
<feature type="chain" id="PRO_1000127235" description="Cell division protein ZipA">
    <location>
        <begin position="1"/>
        <end position="328"/>
    </location>
</feature>
<feature type="topological domain" description="Periplasmic" evidence="1">
    <location>
        <begin position="1"/>
        <end position="6"/>
    </location>
</feature>
<feature type="transmembrane region" description="Helical" evidence="1">
    <location>
        <begin position="7"/>
        <end position="27"/>
    </location>
</feature>
<feature type="topological domain" description="Cytoplasmic" evidence="1">
    <location>
        <begin position="28"/>
        <end position="328"/>
    </location>
</feature>
<feature type="region of interest" description="Disordered" evidence="2">
    <location>
        <begin position="61"/>
        <end position="183"/>
    </location>
</feature>
<feature type="compositionally biased region" description="Basic and acidic residues" evidence="2">
    <location>
        <begin position="61"/>
        <end position="72"/>
    </location>
</feature>
<feature type="compositionally biased region" description="Polar residues" evidence="2">
    <location>
        <begin position="95"/>
        <end position="104"/>
    </location>
</feature>
<feature type="compositionally biased region" description="Polar residues" evidence="2">
    <location>
        <begin position="164"/>
        <end position="174"/>
    </location>
</feature>
<organism>
    <name type="scientific">Yersinia pseudotuberculosis serotype IB (strain PB1/+)</name>
    <dbReference type="NCBI Taxonomy" id="502801"/>
    <lineage>
        <taxon>Bacteria</taxon>
        <taxon>Pseudomonadati</taxon>
        <taxon>Pseudomonadota</taxon>
        <taxon>Gammaproteobacteria</taxon>
        <taxon>Enterobacterales</taxon>
        <taxon>Yersiniaceae</taxon>
        <taxon>Yersinia</taxon>
    </lineage>
</organism>
<protein>
    <recommendedName>
        <fullName evidence="1">Cell division protein ZipA</fullName>
    </recommendedName>
</protein>
<gene>
    <name evidence="1" type="primary">zipA</name>
    <name type="ordered locus">YPTS_2812</name>
</gene>
<name>ZIPA_YERPB</name>
<reference key="1">
    <citation type="submission" date="2008-04" db="EMBL/GenBank/DDBJ databases">
        <title>Complete sequence of Yersinia pseudotuberculosis PB1/+.</title>
        <authorList>
            <person name="Copeland A."/>
            <person name="Lucas S."/>
            <person name="Lapidus A."/>
            <person name="Glavina del Rio T."/>
            <person name="Dalin E."/>
            <person name="Tice H."/>
            <person name="Bruce D."/>
            <person name="Goodwin L."/>
            <person name="Pitluck S."/>
            <person name="Munk A.C."/>
            <person name="Brettin T."/>
            <person name="Detter J.C."/>
            <person name="Han C."/>
            <person name="Tapia R."/>
            <person name="Schmutz J."/>
            <person name="Larimer F."/>
            <person name="Land M."/>
            <person name="Hauser L."/>
            <person name="Challacombe J.F."/>
            <person name="Green L."/>
            <person name="Lindler L.E."/>
            <person name="Nikolich M.P."/>
            <person name="Richardson P."/>
        </authorList>
    </citation>
    <scope>NUCLEOTIDE SEQUENCE [LARGE SCALE GENOMIC DNA]</scope>
    <source>
        <strain>PB1/+</strain>
    </source>
</reference>
<dbReference type="EMBL" id="CP001048">
    <property type="protein sequence ID" value="ACC89769.1"/>
    <property type="molecule type" value="Genomic_DNA"/>
</dbReference>
<dbReference type="RefSeq" id="WP_002227089.1">
    <property type="nucleotide sequence ID" value="NZ_CP009780.1"/>
</dbReference>
<dbReference type="SMR" id="B2K918"/>
<dbReference type="GeneID" id="57975708"/>
<dbReference type="KEGG" id="ypb:YPTS_2812"/>
<dbReference type="PATRIC" id="fig|502801.10.peg.2238"/>
<dbReference type="GO" id="GO:0032153">
    <property type="term" value="C:cell division site"/>
    <property type="evidence" value="ECO:0007669"/>
    <property type="project" value="UniProtKB-UniRule"/>
</dbReference>
<dbReference type="GO" id="GO:0005886">
    <property type="term" value="C:plasma membrane"/>
    <property type="evidence" value="ECO:0007669"/>
    <property type="project" value="UniProtKB-SubCell"/>
</dbReference>
<dbReference type="GO" id="GO:0000917">
    <property type="term" value="P:division septum assembly"/>
    <property type="evidence" value="ECO:0007669"/>
    <property type="project" value="TreeGrafter"/>
</dbReference>
<dbReference type="GO" id="GO:0043093">
    <property type="term" value="P:FtsZ-dependent cytokinesis"/>
    <property type="evidence" value="ECO:0007669"/>
    <property type="project" value="UniProtKB-UniRule"/>
</dbReference>
<dbReference type="CDD" id="cd00231">
    <property type="entry name" value="ZipA"/>
    <property type="match status" value="1"/>
</dbReference>
<dbReference type="FunFam" id="3.30.1400.10:FF:000001">
    <property type="entry name" value="Cell division protein ZipA"/>
    <property type="match status" value="1"/>
</dbReference>
<dbReference type="Gene3D" id="3.30.1400.10">
    <property type="entry name" value="ZipA, C-terminal FtsZ-binding domain"/>
    <property type="match status" value="1"/>
</dbReference>
<dbReference type="HAMAP" id="MF_00509">
    <property type="entry name" value="ZipA"/>
    <property type="match status" value="1"/>
</dbReference>
<dbReference type="InterPro" id="IPR011919">
    <property type="entry name" value="Cell_div_ZipA"/>
</dbReference>
<dbReference type="InterPro" id="IPR007449">
    <property type="entry name" value="ZipA_FtsZ-bd_C"/>
</dbReference>
<dbReference type="InterPro" id="IPR036765">
    <property type="entry name" value="ZipA_FtsZ-bd_C_sf"/>
</dbReference>
<dbReference type="NCBIfam" id="TIGR02205">
    <property type="entry name" value="septum_zipA"/>
    <property type="match status" value="1"/>
</dbReference>
<dbReference type="PANTHER" id="PTHR38685">
    <property type="entry name" value="CELL DIVISION PROTEIN ZIPA"/>
    <property type="match status" value="1"/>
</dbReference>
<dbReference type="PANTHER" id="PTHR38685:SF1">
    <property type="entry name" value="CELL DIVISION PROTEIN ZIPA"/>
    <property type="match status" value="1"/>
</dbReference>
<dbReference type="Pfam" id="PF04354">
    <property type="entry name" value="ZipA_C"/>
    <property type="match status" value="1"/>
</dbReference>
<dbReference type="SMART" id="SM00771">
    <property type="entry name" value="ZipA_C"/>
    <property type="match status" value="1"/>
</dbReference>
<dbReference type="SUPFAM" id="SSF64383">
    <property type="entry name" value="Cell-division protein ZipA, C-terminal domain"/>
    <property type="match status" value="1"/>
</dbReference>
<evidence type="ECO:0000255" key="1">
    <source>
        <dbReference type="HAMAP-Rule" id="MF_00509"/>
    </source>
</evidence>
<evidence type="ECO:0000256" key="2">
    <source>
        <dbReference type="SAM" id="MobiDB-lite"/>
    </source>
</evidence>
<proteinExistence type="inferred from homology"/>
<sequence>MMQDLRLILIVVGAIAIIALLLHGLWTSRKERSSLFRDRPVKRTKQERVETPIESLDEGVGEVRVRTSHPQEKPSFNHLDDDDDEVPVIQHAETKSAQVKTASRQAPFASVQTDYDDPLLGGLSAEQPPHDLSRDPLLGKADESYSQPQHAEPPHVEKPAHQVAPQQHVESQQEPVAPAPEAKPQKLKETVLVLHVAAHHGGVIGGEVLLQSVLQSGFQFGEMGIFHRHLSPAGSGPVLFSLANMVKPGSFDPDTMSDFSTPGVSMFMMVPSYGDANQNFKLMLQSAQRIADDVGGVVLDDERRMMTPQKLESYKARIREVLDANTIA</sequence>